<accession>B9DIS4</accession>
<reference key="1">
    <citation type="journal article" date="2009" name="Appl. Environ. Microbiol.">
        <title>Genome analysis of the meat starter culture bacterium Staphylococcus carnosus TM300.</title>
        <authorList>
            <person name="Rosenstein R."/>
            <person name="Nerz C."/>
            <person name="Biswas L."/>
            <person name="Resch A."/>
            <person name="Raddatz G."/>
            <person name="Schuster S.C."/>
            <person name="Goetz F."/>
        </authorList>
    </citation>
    <scope>NUCLEOTIDE SEQUENCE [LARGE SCALE GENOMIC DNA]</scope>
    <source>
        <strain>TM300</strain>
    </source>
</reference>
<dbReference type="EMBL" id="AM295250">
    <property type="protein sequence ID" value="CAL27491.1"/>
    <property type="molecule type" value="Genomic_DNA"/>
</dbReference>
<dbReference type="RefSeq" id="WP_015899835.1">
    <property type="nucleotide sequence ID" value="NC_012121.1"/>
</dbReference>
<dbReference type="SMR" id="B9DIS4"/>
<dbReference type="GeneID" id="93795516"/>
<dbReference type="KEGG" id="sca:SCA_0577"/>
<dbReference type="eggNOG" id="ENOG5033A1U">
    <property type="taxonomic scope" value="Bacteria"/>
</dbReference>
<dbReference type="HOGENOM" id="CLU_146641_2_0_9"/>
<dbReference type="OrthoDB" id="2365314at2"/>
<dbReference type="BioCyc" id="SCAR396513:SCA_RS02950-MONOMER"/>
<dbReference type="Proteomes" id="UP000000444">
    <property type="component" value="Chromosome"/>
</dbReference>
<dbReference type="GO" id="GO:0005886">
    <property type="term" value="C:plasma membrane"/>
    <property type="evidence" value="ECO:0007669"/>
    <property type="project" value="UniProtKB-SubCell"/>
</dbReference>
<dbReference type="HAMAP" id="MF_01536">
    <property type="entry name" value="UPF0344"/>
    <property type="match status" value="1"/>
</dbReference>
<dbReference type="InterPro" id="IPR010899">
    <property type="entry name" value="UPF0344"/>
</dbReference>
<dbReference type="NCBIfam" id="NF010199">
    <property type="entry name" value="PRK13673.1-6"/>
    <property type="match status" value="1"/>
</dbReference>
<dbReference type="Pfam" id="PF07457">
    <property type="entry name" value="DUF1516"/>
    <property type="match status" value="1"/>
</dbReference>
<comment type="subcellular location">
    <subcellularLocation>
        <location evidence="1">Cell membrane</location>
        <topology evidence="1">Multi-pass membrane protein</topology>
    </subcellularLocation>
</comment>
<comment type="similarity">
    <text evidence="1">Belongs to the UPF0344 family.</text>
</comment>
<organism>
    <name type="scientific">Staphylococcus carnosus (strain TM300)</name>
    <dbReference type="NCBI Taxonomy" id="396513"/>
    <lineage>
        <taxon>Bacteria</taxon>
        <taxon>Bacillati</taxon>
        <taxon>Bacillota</taxon>
        <taxon>Bacilli</taxon>
        <taxon>Bacillales</taxon>
        <taxon>Staphylococcaceae</taxon>
        <taxon>Staphylococcus</taxon>
    </lineage>
</organism>
<name>Y577_STACT</name>
<gene>
    <name type="ordered locus">Sca_0577</name>
</gene>
<protein>
    <recommendedName>
        <fullName evidence="1">UPF0344 protein Sca_0577</fullName>
    </recommendedName>
</protein>
<feature type="chain" id="PRO_1000185191" description="UPF0344 protein Sca_0577">
    <location>
        <begin position="1"/>
        <end position="131"/>
    </location>
</feature>
<feature type="transmembrane region" description="Helical" evidence="1">
    <location>
        <begin position="1"/>
        <end position="21"/>
    </location>
</feature>
<feature type="transmembrane region" description="Helical" evidence="1">
    <location>
        <begin position="42"/>
        <end position="62"/>
    </location>
</feature>
<feature type="transmembrane region" description="Helical" evidence="1">
    <location>
        <begin position="69"/>
        <end position="89"/>
    </location>
</feature>
<feature type="transmembrane region" description="Helical" evidence="1">
    <location>
        <begin position="99"/>
        <end position="119"/>
    </location>
</feature>
<evidence type="ECO:0000255" key="1">
    <source>
        <dbReference type="HAMAP-Rule" id="MF_01536"/>
    </source>
</evidence>
<keyword id="KW-1003">Cell membrane</keyword>
<keyword id="KW-0472">Membrane</keyword>
<keyword id="KW-1185">Reference proteome</keyword>
<keyword id="KW-0812">Transmembrane</keyword>
<keyword id="KW-1133">Transmembrane helix</keyword>
<sequence>MLHLHIFSWVIGIILFIVSYISFTKTGAPKKAYKPLHMTLRLFLVLILFSGVWQVVEEFATATGSTHMLLTLKMICGIGVVALMEVTLVRKQRGASHKGLFWGTIALIIVTMALGIILPGGPISNMFVITK</sequence>
<proteinExistence type="inferred from homology"/>